<evidence type="ECO:0000250" key="1">
    <source>
        <dbReference type="UniProtKB" id="P36937"/>
    </source>
</evidence>
<evidence type="ECO:0000255" key="2"/>
<evidence type="ECO:0000269" key="3">
    <source>
    </source>
</evidence>
<evidence type="ECO:0000269" key="4">
    <source>
    </source>
</evidence>
<evidence type="ECO:0000269" key="5">
    <source>
    </source>
</evidence>
<evidence type="ECO:0000305" key="6"/>
<evidence type="ECO:0000312" key="7">
    <source>
        <dbReference type="EMBL" id="CAP15445.1"/>
    </source>
</evidence>
<dbReference type="EMBL" id="AM774418">
    <property type="protein sequence ID" value="CAP15445.1"/>
    <property type="molecule type" value="Genomic_DNA"/>
</dbReference>
<dbReference type="RefSeq" id="WP_012289616.1">
    <property type="nucleotide sequence ID" value="NC_010368.1"/>
</dbReference>
<dbReference type="SMR" id="B0R9L8"/>
<dbReference type="EnsemblBacteria" id="CAP15445">
    <property type="protein sequence ID" value="CAP15445"/>
    <property type="gene ID" value="OE_5051A1F"/>
</dbReference>
<dbReference type="GeneID" id="89343620"/>
<dbReference type="KEGG" id="hsl:OE_5051A1F"/>
<dbReference type="HOGENOM" id="CLU_221466_0_0_2"/>
<dbReference type="Proteomes" id="UP000001321">
    <property type="component" value="Plasmid PHS3"/>
</dbReference>
<dbReference type="GO" id="GO:0005886">
    <property type="term" value="C:plasma membrane"/>
    <property type="evidence" value="ECO:0007669"/>
    <property type="project" value="UniProtKB-SubCell"/>
</dbReference>
<dbReference type="GO" id="GO:0008556">
    <property type="term" value="F:P-type potassium transmembrane transporter activity"/>
    <property type="evidence" value="ECO:0007669"/>
    <property type="project" value="InterPro"/>
</dbReference>
<dbReference type="InterPro" id="IPR011726">
    <property type="entry name" value="KdpF"/>
</dbReference>
<dbReference type="Pfam" id="PF09604">
    <property type="entry name" value="Potass_KdpF"/>
    <property type="match status" value="1"/>
</dbReference>
<organism>
    <name type="scientific">Halobacterium salinarum (strain ATCC 29341 / DSM 671 / R1)</name>
    <dbReference type="NCBI Taxonomy" id="478009"/>
    <lineage>
        <taxon>Archaea</taxon>
        <taxon>Methanobacteriati</taxon>
        <taxon>Methanobacteriota</taxon>
        <taxon>Stenosarchaea group</taxon>
        <taxon>Halobacteria</taxon>
        <taxon>Halobacteriales</taxon>
        <taxon>Halobacteriaceae</taxon>
        <taxon>Halobacterium</taxon>
        <taxon>Halobacterium salinarum NRC-34001</taxon>
    </lineage>
</organism>
<name>KDPF_HALS3</name>
<comment type="function">
    <text evidence="1 3 5">Part of the high-affinity ATP-driven potassium transport (or Kdp) system, which catalyzes the hydrolysis of ATP coupled with the electrogenic transport of potassium into the cytoplasm. This subunit may be involved in stabilization of the complex (By similarity). The Kdp system is essential for growth under K(+) limitation, and for survival under desiccation and salt crystal inclusion (PubMed:18633573, PubMed:23757278).</text>
</comment>
<comment type="subunit">
    <text evidence="1">The system is composed of three essential subunits: KdpA, KdpB and KdpC. The complex also contains KdpF, a small non-essential subunit.</text>
</comment>
<comment type="subcellular location">
    <subcellularLocation>
        <location evidence="6">Cell membrane</location>
        <topology evidence="2">Single-pass membrane protein</topology>
    </subcellularLocation>
</comment>
<comment type="induction">
    <text evidence="3 4 5">Up-regulated in response to K(+) limitation (PubMed:18633573, PubMed:21947979). Induced under desiccating conditions (PubMed:23757278).</text>
</comment>
<comment type="disruption phenotype">
    <text evidence="3">kdpFABCQ and kdpFABC deletion strains are only able to grow in the presence of K(+) concentrations above 60 uM.</text>
</comment>
<comment type="similarity">
    <text evidence="6">Belongs to the KdpF family.</text>
</comment>
<accession>B0R9L8</accession>
<gene>
    <name evidence="7" type="primary">kdpF</name>
    <name evidence="7" type="ordered locus">OE_5051A1F</name>
</gene>
<proteinExistence type="evidence at transcript level"/>
<sequence>MLIGEAVLAVVTVAVVAYLTYVMMYPTRF</sequence>
<feature type="chain" id="PRO_0000433792" description="Potassium-transporting ATPase KdpF subunit">
    <location>
        <begin position="1"/>
        <end position="29"/>
    </location>
</feature>
<feature type="transmembrane region" description="Helical" evidence="2">
    <location>
        <begin position="2"/>
        <end position="22"/>
    </location>
</feature>
<protein>
    <recommendedName>
        <fullName evidence="1">Potassium-transporting ATPase KdpF subunit</fullName>
    </recommendedName>
    <alternativeName>
        <fullName evidence="1">ATP phosphohydrolase [potassium-transporting] F chain</fullName>
    </alternativeName>
    <alternativeName>
        <fullName evidence="1">Potassium-binding and translocating subunit F</fullName>
    </alternativeName>
    <alternativeName>
        <fullName evidence="1">Potassium-translocating ATPase F chain</fullName>
    </alternativeName>
</protein>
<reference key="1">
    <citation type="journal article" date="2008" name="Genomics">
        <title>Evolution in the laboratory: the genome of Halobacterium salinarum strain R1 compared to that of strain NRC-1.</title>
        <authorList>
            <person name="Pfeiffer F."/>
            <person name="Schuster S.C."/>
            <person name="Broicher A."/>
            <person name="Falb M."/>
            <person name="Palm P."/>
            <person name="Rodewald K."/>
            <person name="Ruepp A."/>
            <person name="Soppa J."/>
            <person name="Tittor J."/>
            <person name="Oesterhelt D."/>
        </authorList>
    </citation>
    <scope>NUCLEOTIDE SEQUENCE [LARGE SCALE GENOMIC DNA]</scope>
    <source>
        <strain>ATCC 29341 / DSM 671 / R1</strain>
    </source>
</reference>
<reference key="2">
    <citation type="journal article" date="2008" name="Extremophiles">
        <title>The extremely halophilic archaeon Halobacterium salinarum R1 responds to potassium limitation by expression of the K+-transporting KdpFABC P-type ATPase and by a decrease in intracellular K+.</title>
        <authorList>
            <person name="Strahl H."/>
            <person name="Greie J.C."/>
        </authorList>
    </citation>
    <scope>FUNCTION</scope>
    <scope>INDUCTION</scope>
    <scope>DISRUPTION PHENOTYPE</scope>
    <source>
        <strain>ATCC 29341 / DSM 671 / R1</strain>
    </source>
</reference>
<reference key="3">
    <citation type="journal article" date="2011" name="Extremophiles">
        <title>Archaeal transcriptional regulation of the prokaryotic KdpFABC complex mediating K(+) uptake in H. salinarum.</title>
        <authorList>
            <person name="Kixmueller D."/>
            <person name="Strahl H."/>
            <person name="Wende A."/>
            <person name="Greie J.C."/>
        </authorList>
    </citation>
    <scope>INDUCTION</scope>
    <source>
        <strain>ATCC 29341 / DSM 671 / R1</strain>
    </source>
</reference>
<reference key="4">
    <citation type="journal article" date="2012" name="Environ. Microbiol. Rep.">
        <title>An ATP-driven potassium pump promotes long-term survival of Halobacterium salinarum within salt crystals.</title>
        <authorList>
            <person name="Kixmueller D."/>
            <person name="Greie J.C."/>
        </authorList>
    </citation>
    <scope>FUNCTION</scope>
    <scope>INDUCTION</scope>
    <source>
        <strain>ATCC 29341 / DSM 671 / R1</strain>
    </source>
</reference>
<geneLocation type="plasmid" evidence="7">
    <name>PHS3</name>
</geneLocation>
<keyword id="KW-1003">Cell membrane</keyword>
<keyword id="KW-0406">Ion transport</keyword>
<keyword id="KW-0472">Membrane</keyword>
<keyword id="KW-0614">Plasmid</keyword>
<keyword id="KW-0630">Potassium</keyword>
<keyword id="KW-0633">Potassium transport</keyword>
<keyword id="KW-0812">Transmembrane</keyword>
<keyword id="KW-1133">Transmembrane helix</keyword>
<keyword id="KW-0813">Transport</keyword>